<accession>A7MEU5</accession>
<protein>
    <recommendedName>
        <fullName evidence="1">Chromosome partition protein MukF</fullName>
    </recommendedName>
</protein>
<sequence>MSTFSQTVPELVAWARKNDFSIQLPVDRLAFLLAIATLNGERLDGEMSEGELVDAFRHVSDAFEQSTETVAQRANNAINDMVRQRLLNRFTSEQAEGNAIYRLTPLGIGITDYYIRQREFSTLRLSMQLSIVASELKRAADAAQEGGDEFHWHRNVYAPLKYSVAEIFDSIDLTQRIMDEQQQLVKDDIAQLLNKDWRAAISSCELLLSETSGTLRELQDTLEAAGDKLQANLLQIQEATLGRDDLHFVDRLTYDLQSKLDRIISWGQQAIDLWIGYDRHVHKFIRTAIDMDKNRVFAQRLRQSVQNYFDAPWALTYASADRLLDMRDEEMTLRDEEVTGELPPDLEFEEFNEIREQLAAMIEAQLNVYRERQQPLDLSVVMRDYLTQFPRARHFDVARIVVDQAVRLGVAEADFTGLPAKWQPINDYGAKVQANVIDKY</sequence>
<keyword id="KW-0106">Calcium</keyword>
<keyword id="KW-0131">Cell cycle</keyword>
<keyword id="KW-0132">Cell division</keyword>
<keyword id="KW-0159">Chromosome partition</keyword>
<keyword id="KW-0963">Cytoplasm</keyword>
<keyword id="KW-0226">DNA condensation</keyword>
<keyword id="KW-1185">Reference proteome</keyword>
<comment type="function">
    <text evidence="1">Involved in chromosome condensation, segregation and cell cycle progression. May participate in facilitating chromosome segregation by condensation DNA from both sides of a centrally located replisome during cell division. Not required for mini-F plasmid partitioning. Probably acts via its interaction with MukB and MukE. Overexpression results in anucleate cells. It has a calcium binding activity.</text>
</comment>
<comment type="subunit">
    <text evidence="1">Interacts, and probably forms a ternary complex, with MukE and MukB via its C-terminal region. The complex formation is stimulated by calcium or magnesium. It is required for an interaction between MukE and MukB.</text>
</comment>
<comment type="subcellular location">
    <subcellularLocation>
        <location evidence="1">Cytoplasm</location>
        <location evidence="1">Nucleoid</location>
    </subcellularLocation>
    <text evidence="1">Restricted to the nucleoid region.</text>
</comment>
<comment type="similarity">
    <text evidence="1">Belongs to the MukF family.</text>
</comment>
<evidence type="ECO:0000255" key="1">
    <source>
        <dbReference type="HAMAP-Rule" id="MF_01803"/>
    </source>
</evidence>
<proteinExistence type="inferred from homology"/>
<feature type="chain" id="PRO_1000069931" description="Chromosome partition protein MukF">
    <location>
        <begin position="1"/>
        <end position="440"/>
    </location>
</feature>
<feature type="region of interest" description="Leucine-zipper">
    <location>
        <begin position="208"/>
        <end position="236"/>
    </location>
</feature>
<dbReference type="EMBL" id="CP000783">
    <property type="protein sequence ID" value="ABU77666.1"/>
    <property type="molecule type" value="Genomic_DNA"/>
</dbReference>
<dbReference type="RefSeq" id="WP_004385488.1">
    <property type="nucleotide sequence ID" value="NC_009778.1"/>
</dbReference>
<dbReference type="SMR" id="A7MEU5"/>
<dbReference type="GeneID" id="45716101"/>
<dbReference type="KEGG" id="esa:ESA_02420"/>
<dbReference type="HOGENOM" id="CLU_049853_0_0_6"/>
<dbReference type="Proteomes" id="UP000000260">
    <property type="component" value="Chromosome"/>
</dbReference>
<dbReference type="GO" id="GO:0005737">
    <property type="term" value="C:cytoplasm"/>
    <property type="evidence" value="ECO:0007669"/>
    <property type="project" value="UniProtKB-UniRule"/>
</dbReference>
<dbReference type="GO" id="GO:0009295">
    <property type="term" value="C:nucleoid"/>
    <property type="evidence" value="ECO:0007669"/>
    <property type="project" value="UniProtKB-SubCell"/>
</dbReference>
<dbReference type="GO" id="GO:0005509">
    <property type="term" value="F:calcium ion binding"/>
    <property type="evidence" value="ECO:0007669"/>
    <property type="project" value="UniProtKB-UniRule"/>
</dbReference>
<dbReference type="GO" id="GO:0051301">
    <property type="term" value="P:cell division"/>
    <property type="evidence" value="ECO:0007669"/>
    <property type="project" value="UniProtKB-KW"/>
</dbReference>
<dbReference type="GO" id="GO:0030261">
    <property type="term" value="P:chromosome condensation"/>
    <property type="evidence" value="ECO:0007669"/>
    <property type="project" value="UniProtKB-KW"/>
</dbReference>
<dbReference type="GO" id="GO:0007059">
    <property type="term" value="P:chromosome segregation"/>
    <property type="evidence" value="ECO:0007669"/>
    <property type="project" value="UniProtKB-UniRule"/>
</dbReference>
<dbReference type="GO" id="GO:0006260">
    <property type="term" value="P:DNA replication"/>
    <property type="evidence" value="ECO:0007669"/>
    <property type="project" value="UniProtKB-UniRule"/>
</dbReference>
<dbReference type="CDD" id="cd16337">
    <property type="entry name" value="MukF_C"/>
    <property type="match status" value="1"/>
</dbReference>
<dbReference type="CDD" id="cd16335">
    <property type="entry name" value="MukF_N"/>
    <property type="match status" value="1"/>
</dbReference>
<dbReference type="Gene3D" id="1.20.58.590">
    <property type="entry name" value="Chromosome partition protein MukF, middle domain"/>
    <property type="match status" value="1"/>
</dbReference>
<dbReference type="Gene3D" id="1.10.225.40">
    <property type="entry name" value="MukF, C-terminal domain"/>
    <property type="match status" value="1"/>
</dbReference>
<dbReference type="Gene3D" id="1.10.10.10">
    <property type="entry name" value="Winged helix-like DNA-binding domain superfamily/Winged helix DNA-binding domain"/>
    <property type="match status" value="1"/>
</dbReference>
<dbReference type="HAMAP" id="MF_01803">
    <property type="entry name" value="MukF"/>
    <property type="match status" value="1"/>
</dbReference>
<dbReference type="InterPro" id="IPR005582">
    <property type="entry name" value="Chromosome_partition_MukF"/>
</dbReference>
<dbReference type="InterPro" id="IPR033441">
    <property type="entry name" value="MukF_C"/>
</dbReference>
<dbReference type="InterPro" id="IPR038198">
    <property type="entry name" value="MukF_C_sf"/>
</dbReference>
<dbReference type="InterPro" id="IPR033440">
    <property type="entry name" value="MukF_M"/>
</dbReference>
<dbReference type="InterPro" id="IPR036141">
    <property type="entry name" value="MukF_M_sp"/>
</dbReference>
<dbReference type="InterPro" id="IPR033439">
    <property type="entry name" value="MukF_WHTH"/>
</dbReference>
<dbReference type="InterPro" id="IPR036388">
    <property type="entry name" value="WH-like_DNA-bd_sf"/>
</dbReference>
<dbReference type="InterPro" id="IPR036390">
    <property type="entry name" value="WH_DNA-bd_sf"/>
</dbReference>
<dbReference type="NCBIfam" id="NF003615">
    <property type="entry name" value="PRK05260.1"/>
    <property type="match status" value="1"/>
</dbReference>
<dbReference type="Pfam" id="PF03882">
    <property type="entry name" value="KicB"/>
    <property type="match status" value="1"/>
</dbReference>
<dbReference type="Pfam" id="PF17193">
    <property type="entry name" value="MukF_C"/>
    <property type="match status" value="1"/>
</dbReference>
<dbReference type="Pfam" id="PF17192">
    <property type="entry name" value="MukF_M"/>
    <property type="match status" value="1"/>
</dbReference>
<dbReference type="PIRSF" id="PIRSF018282">
    <property type="entry name" value="MukF"/>
    <property type="match status" value="1"/>
</dbReference>
<dbReference type="SUPFAM" id="SSF140570">
    <property type="entry name" value="MukF C-terminal domain-like"/>
    <property type="match status" value="1"/>
</dbReference>
<dbReference type="SUPFAM" id="SSF46785">
    <property type="entry name" value="Winged helix' DNA-binding domain"/>
    <property type="match status" value="1"/>
</dbReference>
<name>MUKF_CROS8</name>
<reference key="1">
    <citation type="journal article" date="2010" name="PLoS ONE">
        <title>Genome sequence of Cronobacter sakazakii BAA-894 and comparative genomic hybridization analysis with other Cronobacter species.</title>
        <authorList>
            <person name="Kucerova E."/>
            <person name="Clifton S.W."/>
            <person name="Xia X.Q."/>
            <person name="Long F."/>
            <person name="Porwollik S."/>
            <person name="Fulton L."/>
            <person name="Fronick C."/>
            <person name="Minx P."/>
            <person name="Kyung K."/>
            <person name="Warren W."/>
            <person name="Fulton R."/>
            <person name="Feng D."/>
            <person name="Wollam A."/>
            <person name="Shah N."/>
            <person name="Bhonagiri V."/>
            <person name="Nash W.E."/>
            <person name="Hallsworth-Pepin K."/>
            <person name="Wilson R.K."/>
            <person name="McClelland M."/>
            <person name="Forsythe S.J."/>
        </authorList>
    </citation>
    <scope>NUCLEOTIDE SEQUENCE [LARGE SCALE GENOMIC DNA]</scope>
    <source>
        <strain>ATCC BAA-894</strain>
    </source>
</reference>
<organism>
    <name type="scientific">Cronobacter sakazakii (strain ATCC BAA-894)</name>
    <name type="common">Enterobacter sakazakii</name>
    <dbReference type="NCBI Taxonomy" id="290339"/>
    <lineage>
        <taxon>Bacteria</taxon>
        <taxon>Pseudomonadati</taxon>
        <taxon>Pseudomonadota</taxon>
        <taxon>Gammaproteobacteria</taxon>
        <taxon>Enterobacterales</taxon>
        <taxon>Enterobacteriaceae</taxon>
        <taxon>Cronobacter</taxon>
    </lineage>
</organism>
<gene>
    <name evidence="1" type="primary">mukF</name>
    <name type="ordered locus">ESA_02420</name>
</gene>